<keyword id="KW-0004">4Fe-4S</keyword>
<keyword id="KW-0025">Alternative splicing</keyword>
<keyword id="KW-0150">Chloroplast</keyword>
<keyword id="KW-0227">DNA damage</keyword>
<keyword id="KW-0234">DNA repair</keyword>
<keyword id="KW-0326">Glycosidase</keyword>
<keyword id="KW-0378">Hydrolase</keyword>
<keyword id="KW-0408">Iron</keyword>
<keyword id="KW-0411">Iron-sulfur</keyword>
<keyword id="KW-0456">Lyase</keyword>
<keyword id="KW-0479">Metal-binding</keyword>
<keyword id="KW-0934">Plastid</keyword>
<keyword id="KW-1185">Reference proteome</keyword>
<keyword id="KW-0809">Transit peptide</keyword>
<name>NTH1_ARATH</name>
<reference key="1">
    <citation type="journal article" date="1999" name="Nature">
        <title>Sequence and analysis of chromosome 2 of the plant Arabidopsis thaliana.</title>
        <authorList>
            <person name="Lin X."/>
            <person name="Kaul S."/>
            <person name="Rounsley S.D."/>
            <person name="Shea T.P."/>
            <person name="Benito M.-I."/>
            <person name="Town C.D."/>
            <person name="Fujii C.Y."/>
            <person name="Mason T.M."/>
            <person name="Bowman C.L."/>
            <person name="Barnstead M.E."/>
            <person name="Feldblyum T.V."/>
            <person name="Buell C.R."/>
            <person name="Ketchum K.A."/>
            <person name="Lee J.J."/>
            <person name="Ronning C.M."/>
            <person name="Koo H.L."/>
            <person name="Moffat K.S."/>
            <person name="Cronin L.A."/>
            <person name="Shen M."/>
            <person name="Pai G."/>
            <person name="Van Aken S."/>
            <person name="Umayam L."/>
            <person name="Tallon L.J."/>
            <person name="Gill J.E."/>
            <person name="Adams M.D."/>
            <person name="Carrera A.J."/>
            <person name="Creasy T.H."/>
            <person name="Goodman H.M."/>
            <person name="Somerville C.R."/>
            <person name="Copenhaver G.P."/>
            <person name="Preuss D."/>
            <person name="Nierman W.C."/>
            <person name="White O."/>
            <person name="Eisen J.A."/>
            <person name="Salzberg S.L."/>
            <person name="Fraser C.M."/>
            <person name="Venter J.C."/>
        </authorList>
    </citation>
    <scope>NUCLEOTIDE SEQUENCE [LARGE SCALE GENOMIC DNA]</scope>
    <source>
        <strain>cv. Columbia</strain>
    </source>
</reference>
<reference key="2">
    <citation type="journal article" date="2017" name="Plant J.">
        <title>Araport11: a complete reannotation of the Arabidopsis thaliana reference genome.</title>
        <authorList>
            <person name="Cheng C.Y."/>
            <person name="Krishnakumar V."/>
            <person name="Chan A.P."/>
            <person name="Thibaud-Nissen F."/>
            <person name="Schobel S."/>
            <person name="Town C.D."/>
        </authorList>
    </citation>
    <scope>GENOME REANNOTATION</scope>
    <source>
        <strain>cv. Columbia</strain>
    </source>
</reference>
<reference key="3">
    <citation type="journal article" date="2003" name="Science">
        <title>Empirical analysis of transcriptional activity in the Arabidopsis genome.</title>
        <authorList>
            <person name="Yamada K."/>
            <person name="Lim J."/>
            <person name="Dale J.M."/>
            <person name="Chen H."/>
            <person name="Shinn P."/>
            <person name="Palm C.J."/>
            <person name="Southwick A.M."/>
            <person name="Wu H.C."/>
            <person name="Kim C.J."/>
            <person name="Nguyen M."/>
            <person name="Pham P.K."/>
            <person name="Cheuk R.F."/>
            <person name="Karlin-Newmann G."/>
            <person name="Liu S.X."/>
            <person name="Lam B."/>
            <person name="Sakano H."/>
            <person name="Wu T."/>
            <person name="Yu G."/>
            <person name="Miranda M."/>
            <person name="Quach H.L."/>
            <person name="Tripp M."/>
            <person name="Chang C.H."/>
            <person name="Lee J.M."/>
            <person name="Toriumi M.J."/>
            <person name="Chan M.M."/>
            <person name="Tang C.C."/>
            <person name="Onodera C.S."/>
            <person name="Deng J.M."/>
            <person name="Akiyama K."/>
            <person name="Ansari Y."/>
            <person name="Arakawa T."/>
            <person name="Banh J."/>
            <person name="Banno F."/>
            <person name="Bowser L."/>
            <person name="Brooks S.Y."/>
            <person name="Carninci P."/>
            <person name="Chao Q."/>
            <person name="Choy N."/>
            <person name="Enju A."/>
            <person name="Goldsmith A.D."/>
            <person name="Gurjal M."/>
            <person name="Hansen N.F."/>
            <person name="Hayashizaki Y."/>
            <person name="Johnson-Hopson C."/>
            <person name="Hsuan V.W."/>
            <person name="Iida K."/>
            <person name="Karnes M."/>
            <person name="Khan S."/>
            <person name="Koesema E."/>
            <person name="Ishida J."/>
            <person name="Jiang P.X."/>
            <person name="Jones T."/>
            <person name="Kawai J."/>
            <person name="Kamiya A."/>
            <person name="Meyers C."/>
            <person name="Nakajima M."/>
            <person name="Narusaka M."/>
            <person name="Seki M."/>
            <person name="Sakurai T."/>
            <person name="Satou M."/>
            <person name="Tamse R."/>
            <person name="Vaysberg M."/>
            <person name="Wallender E.K."/>
            <person name="Wong C."/>
            <person name="Yamamura Y."/>
            <person name="Yuan S."/>
            <person name="Shinozaki K."/>
            <person name="Davis R.W."/>
            <person name="Theologis A."/>
            <person name="Ecker J.R."/>
        </authorList>
    </citation>
    <scope>NUCLEOTIDE SEQUENCE [LARGE SCALE MRNA] (ISOFORM 2)</scope>
    <source>
        <strain>cv. Columbia</strain>
    </source>
</reference>
<reference key="4">
    <citation type="submission" date="2002-03" db="EMBL/GenBank/DDBJ databases">
        <title>Full-length cDNA from Arabidopsis thaliana.</title>
        <authorList>
            <person name="Brover V.V."/>
            <person name="Troukhan M.E."/>
            <person name="Alexandrov N.A."/>
            <person name="Lu Y.-P."/>
            <person name="Flavell R.B."/>
            <person name="Feldmann K.A."/>
        </authorList>
    </citation>
    <scope>NUCLEOTIDE SEQUENCE [LARGE SCALE MRNA] (ISOFORM 1)</scope>
</reference>
<reference key="5">
    <citation type="journal article" date="2000" name="Plant Mol. Biol.">
        <title>cDNA cloning, expression and functional characterization of an Arabidopsis thaliana homologue of the Escherichia coli DNA repair enzyme endonuclease III.</title>
        <authorList>
            <person name="Roldan-Arjona T."/>
            <person name="Garcia-Ortiz M.V."/>
            <person name="Ruiz-Rubio M."/>
            <person name="Ariza R.R."/>
        </authorList>
    </citation>
    <scope>NUCLEOTIDE SEQUENCE [MRNA] OF 18-379</scope>
    <scope>FUNCTION</scope>
    <scope>TISSUE SPECIFICITY</scope>
    <source>
        <strain>cv. Columbia</strain>
    </source>
</reference>
<reference key="6">
    <citation type="journal article" date="2009" name="J. Biol. Chem.">
        <title>Evidence for base excision repair of oxidative DNA damage in chloroplasts of Arabidopsis thaliana.</title>
        <authorList>
            <person name="Gutman B.L."/>
            <person name="Niyogi K.K."/>
        </authorList>
    </citation>
    <scope>DISRUPTION PHENOTYPE</scope>
    <scope>SUBCELLULAR LOCATION</scope>
    <source>
        <strain>cv. Columbia</strain>
    </source>
</reference>
<evidence type="ECO:0000255" key="1"/>
<evidence type="ECO:0000255" key="2">
    <source>
        <dbReference type="HAMAP-Rule" id="MF_03183"/>
    </source>
</evidence>
<evidence type="ECO:0000269" key="3">
    <source>
    </source>
</evidence>
<evidence type="ECO:0000269" key="4">
    <source>
    </source>
</evidence>
<evidence type="ECO:0000303" key="5">
    <source>
    </source>
</evidence>
<evidence type="ECO:0000305" key="6"/>
<sequence>MILLVNGGAATSIHPNAARFYRIGTMSRQIHGAVSSSKHISLKTQHPLSDSNSELAYGASGSETRVYTRKKRLKQEPFEPLEKYSGKGVNTHKLCGLPDIEDFAYKKTIGSPSSSRSTETSITVTSVKTAGYPPENWVEVLEGIRQMRSSEDAPVDSMGCDKAGSFLPPTERRFAVLLGALLSSQTKDQVNNAAIHRLHQNGLLTPEAVDKADESTIKELIYPVGFYTRKATYMKKIARICLVKYDGDIPSSLDDLLSLPGIGPKMAHLILHIAWNDVQGICVDTHVHRICNRLGWVSRPGTKQKTTSPEETRVALQQWLPKEEWVAINPLLVGFGQMICTPIRPRCEACSVSKLCPAAFKETSSPSSKLKKSNRSKEP</sequence>
<accession>Q9SIC4</accession>
<accession>Q8LF57</accession>
<accession>Q8VZT5</accession>
<accession>Q9FT83</accession>
<comment type="function">
    <text evidence="2 3">Bifunctional DNA N-glycosylase with associated apurinic/apyrimidinic (AP) lyase function that catalyzes the first step in base excision repair (BER), the primary repair pathway for the repair of oxidative DNA damage. The DNA N-glycosylase activity releases the damaged DNA base from DNA by cleaving the N-glycosidic bond, leaving an AP site. The AP lyase activity cleaves the phosphodiester bond 3' to the AP site by a beta-elimination. Primarily recognizes and repairs oxidative base damage of pyrimidines.</text>
</comment>
<comment type="catalytic activity">
    <reaction evidence="2">
        <text>2'-deoxyribonucleotide-(2'-deoxyribose 5'-phosphate)-2'-deoxyribonucleotide-DNA = a 3'-end 2'-deoxyribonucleotide-(2,3-dehydro-2,3-deoxyribose 5'-phosphate)-DNA + a 5'-end 5'-phospho-2'-deoxyribonucleoside-DNA + H(+)</text>
        <dbReference type="Rhea" id="RHEA:66592"/>
        <dbReference type="Rhea" id="RHEA-COMP:13180"/>
        <dbReference type="Rhea" id="RHEA-COMP:16897"/>
        <dbReference type="Rhea" id="RHEA-COMP:17067"/>
        <dbReference type="ChEBI" id="CHEBI:15378"/>
        <dbReference type="ChEBI" id="CHEBI:136412"/>
        <dbReference type="ChEBI" id="CHEBI:157695"/>
        <dbReference type="ChEBI" id="CHEBI:167181"/>
        <dbReference type="EC" id="4.2.99.18"/>
    </reaction>
</comment>
<comment type="cofactor">
    <cofactor evidence="2">
        <name>[4Fe-4S] cluster</name>
        <dbReference type="ChEBI" id="CHEBI:49883"/>
    </cofactor>
    <text evidence="2">Binds 1 [4Fe-4S] cluster. The cluster does not appear to play a role in catalysis, but is probably involved in the proper positioning of the enzyme along the DNA strand.</text>
</comment>
<comment type="subcellular location">
    <subcellularLocation>
        <location evidence="4">Plastid</location>
        <location evidence="4">Chloroplast stroma</location>
        <location evidence="4">Chloroplast nucleoid</location>
    </subcellularLocation>
</comment>
<comment type="alternative products">
    <event type="alternative splicing"/>
    <isoform>
        <id>Q9SIC4-1</id>
        <name>1</name>
        <sequence type="displayed"/>
    </isoform>
    <isoform>
        <id>Q9SIC4-2</id>
        <name>2</name>
        <sequence type="described" ref="VSP_053921"/>
    </isoform>
</comment>
<comment type="tissue specificity">
    <text evidence="3">Expressed at low levels in roots, stems, leaves and flowers.</text>
</comment>
<comment type="disruption phenotype">
    <text evidence="4">No effect on chloroplastic glycosylase-lyase/endonuclease activity, probably due to function redundancy.</text>
</comment>
<comment type="similarity">
    <text evidence="2">Belongs to the Nth/MutY family.</text>
</comment>
<comment type="sequence caution" evidence="6">
    <conflict type="erroneous initiation">
        <sequence resource="EMBL-CDS" id="CAC16135"/>
    </conflict>
    <text>Truncated N-terminus.</text>
</comment>
<dbReference type="EC" id="3.2.2.-" evidence="2"/>
<dbReference type="EC" id="4.2.99.18" evidence="2"/>
<dbReference type="EMBL" id="AC007169">
    <property type="protein sequence ID" value="AAD26474.2"/>
    <property type="molecule type" value="Genomic_DNA"/>
</dbReference>
<dbReference type="EMBL" id="CP002685">
    <property type="protein sequence ID" value="AEC08549.1"/>
    <property type="molecule type" value="Genomic_DNA"/>
</dbReference>
<dbReference type="EMBL" id="CP002685">
    <property type="protein sequence ID" value="AEC08550.1"/>
    <property type="molecule type" value="Genomic_DNA"/>
</dbReference>
<dbReference type="EMBL" id="AY063851">
    <property type="protein sequence ID" value="AAL36207.1"/>
    <property type="molecule type" value="mRNA"/>
</dbReference>
<dbReference type="EMBL" id="AY091229">
    <property type="protein sequence ID" value="AAM14168.1"/>
    <property type="molecule type" value="mRNA"/>
</dbReference>
<dbReference type="EMBL" id="AY085041">
    <property type="protein sequence ID" value="AAM61598.1"/>
    <property type="molecule type" value="mRNA"/>
</dbReference>
<dbReference type="EMBL" id="AJ272248">
    <property type="protein sequence ID" value="CAC16135.1"/>
    <property type="status" value="ALT_INIT"/>
    <property type="molecule type" value="mRNA"/>
</dbReference>
<dbReference type="PIR" id="H84720">
    <property type="entry name" value="H84720"/>
</dbReference>
<dbReference type="RefSeq" id="NP_001077988.1">
    <molecule id="Q9SIC4-2"/>
    <property type="nucleotide sequence ID" value="NM_001084519.1"/>
</dbReference>
<dbReference type="RefSeq" id="NP_565725.1">
    <molecule id="Q9SIC4-1"/>
    <property type="nucleotide sequence ID" value="NM_128702.3"/>
</dbReference>
<dbReference type="SMR" id="Q9SIC4"/>
<dbReference type="FunCoup" id="Q9SIC4">
    <property type="interactions" value="2518"/>
</dbReference>
<dbReference type="STRING" id="3702.Q9SIC4"/>
<dbReference type="iPTMnet" id="Q9SIC4"/>
<dbReference type="PaxDb" id="3702-AT2G31450.1"/>
<dbReference type="ProteomicsDB" id="248939">
    <molecule id="Q9SIC4-1"/>
</dbReference>
<dbReference type="EnsemblPlants" id="AT2G31450.1">
    <molecule id="Q9SIC4-1"/>
    <property type="protein sequence ID" value="AT2G31450.1"/>
    <property type="gene ID" value="AT2G31450"/>
</dbReference>
<dbReference type="EnsemblPlants" id="AT2G31450.2">
    <molecule id="Q9SIC4-2"/>
    <property type="protein sequence ID" value="AT2G31450.2"/>
    <property type="gene ID" value="AT2G31450"/>
</dbReference>
<dbReference type="GeneID" id="817703"/>
<dbReference type="Gramene" id="AT2G31450.1">
    <molecule id="Q9SIC4-1"/>
    <property type="protein sequence ID" value="AT2G31450.1"/>
    <property type="gene ID" value="AT2G31450"/>
</dbReference>
<dbReference type="Gramene" id="AT2G31450.2">
    <molecule id="Q9SIC4-2"/>
    <property type="protein sequence ID" value="AT2G31450.2"/>
    <property type="gene ID" value="AT2G31450"/>
</dbReference>
<dbReference type="KEGG" id="ath:AT2G31450"/>
<dbReference type="Araport" id="AT2G31450"/>
<dbReference type="TAIR" id="AT2G31450">
    <property type="gene designation" value="ATNTH1"/>
</dbReference>
<dbReference type="eggNOG" id="KOG1921">
    <property type="taxonomic scope" value="Eukaryota"/>
</dbReference>
<dbReference type="InParanoid" id="Q9SIC4"/>
<dbReference type="OMA" id="RVRTMNR"/>
<dbReference type="PhylomeDB" id="Q9SIC4"/>
<dbReference type="BRENDA" id="4.2.99.18">
    <property type="organism ID" value="399"/>
</dbReference>
<dbReference type="PRO" id="PR:Q9SIC4"/>
<dbReference type="Proteomes" id="UP000006548">
    <property type="component" value="Chromosome 2"/>
</dbReference>
<dbReference type="ExpressionAtlas" id="Q9SIC4">
    <property type="expression patterns" value="baseline and differential"/>
</dbReference>
<dbReference type="GO" id="GO:0042644">
    <property type="term" value="C:chloroplast nucleoid"/>
    <property type="evidence" value="ECO:0000314"/>
    <property type="project" value="TAIR"/>
</dbReference>
<dbReference type="GO" id="GO:0005634">
    <property type="term" value="C:nucleus"/>
    <property type="evidence" value="ECO:0007669"/>
    <property type="project" value="InterPro"/>
</dbReference>
<dbReference type="GO" id="GO:0051539">
    <property type="term" value="F:4 iron, 4 sulfur cluster binding"/>
    <property type="evidence" value="ECO:0007669"/>
    <property type="project" value="UniProtKB-KW"/>
</dbReference>
<dbReference type="GO" id="GO:0140078">
    <property type="term" value="F:class I DNA-(apurinic or apyrimidinic site) endonuclease activity"/>
    <property type="evidence" value="ECO:0007669"/>
    <property type="project" value="UniProtKB-EC"/>
</dbReference>
<dbReference type="GO" id="GO:0003677">
    <property type="term" value="F:DNA binding"/>
    <property type="evidence" value="ECO:0007669"/>
    <property type="project" value="UniProtKB-UniRule"/>
</dbReference>
<dbReference type="GO" id="GO:0019104">
    <property type="term" value="F:DNA N-glycosylase activity"/>
    <property type="evidence" value="ECO:0000314"/>
    <property type="project" value="UniProtKB"/>
</dbReference>
<dbReference type="GO" id="GO:0003906">
    <property type="term" value="F:DNA-(apurinic or apyrimidinic site) endonuclease activity"/>
    <property type="evidence" value="ECO:0000314"/>
    <property type="project" value="UniProtKB"/>
</dbReference>
<dbReference type="GO" id="GO:0046872">
    <property type="term" value="F:metal ion binding"/>
    <property type="evidence" value="ECO:0007669"/>
    <property type="project" value="UniProtKB-KW"/>
</dbReference>
<dbReference type="GO" id="GO:0000703">
    <property type="term" value="F:oxidized pyrimidine nucleobase lesion DNA N-glycosylase activity"/>
    <property type="evidence" value="ECO:0007669"/>
    <property type="project" value="UniProtKB-UniRule"/>
</dbReference>
<dbReference type="GO" id="GO:0006284">
    <property type="term" value="P:base-excision repair"/>
    <property type="evidence" value="ECO:0000314"/>
    <property type="project" value="UniProtKB"/>
</dbReference>
<dbReference type="GO" id="GO:0006285">
    <property type="term" value="P:base-excision repair, AP site formation"/>
    <property type="evidence" value="ECO:0007669"/>
    <property type="project" value="UniProtKB-UniRule"/>
</dbReference>
<dbReference type="CDD" id="cd00056">
    <property type="entry name" value="ENDO3c"/>
    <property type="match status" value="1"/>
</dbReference>
<dbReference type="FunFam" id="1.10.1670.10:FF:000003">
    <property type="entry name" value="Endonuclease III homolog"/>
    <property type="match status" value="1"/>
</dbReference>
<dbReference type="FunFam" id="1.10.340.30:FF:000005">
    <property type="entry name" value="Endonuclease III-like protein 1"/>
    <property type="match status" value="1"/>
</dbReference>
<dbReference type="Gene3D" id="1.10.1670.10">
    <property type="entry name" value="Helix-hairpin-Helix base-excision DNA repair enzymes (C-terminal)"/>
    <property type="match status" value="1"/>
</dbReference>
<dbReference type="Gene3D" id="1.10.340.30">
    <property type="entry name" value="Hypothetical protein, domain 2"/>
    <property type="match status" value="1"/>
</dbReference>
<dbReference type="HAMAP" id="MF_03183">
    <property type="entry name" value="Endonuclease_III_Nth"/>
    <property type="match status" value="1"/>
</dbReference>
<dbReference type="InterPro" id="IPR011257">
    <property type="entry name" value="DNA_glycosylase"/>
</dbReference>
<dbReference type="InterPro" id="IPR004036">
    <property type="entry name" value="Endonuclease-III-like_CS2"/>
</dbReference>
<dbReference type="InterPro" id="IPR003651">
    <property type="entry name" value="Endonuclease3_FeS-loop_motif"/>
</dbReference>
<dbReference type="InterPro" id="IPR004035">
    <property type="entry name" value="Endouclease-III_FeS-bd_BS"/>
</dbReference>
<dbReference type="InterPro" id="IPR003265">
    <property type="entry name" value="HhH-GPD_domain"/>
</dbReference>
<dbReference type="InterPro" id="IPR023170">
    <property type="entry name" value="HhH_base_excis_C"/>
</dbReference>
<dbReference type="InterPro" id="IPR000445">
    <property type="entry name" value="HhH_motif"/>
</dbReference>
<dbReference type="InterPro" id="IPR030841">
    <property type="entry name" value="NTH1"/>
</dbReference>
<dbReference type="PANTHER" id="PTHR43286:SF5">
    <property type="entry name" value="ENDONUCLEASE III HOMOLOG 1, CHLOROPLASTIC"/>
    <property type="match status" value="1"/>
</dbReference>
<dbReference type="PANTHER" id="PTHR43286">
    <property type="entry name" value="ENDONUCLEASE III-LIKE PROTEIN 1"/>
    <property type="match status" value="1"/>
</dbReference>
<dbReference type="Pfam" id="PF00633">
    <property type="entry name" value="HHH"/>
    <property type="match status" value="1"/>
</dbReference>
<dbReference type="Pfam" id="PF00730">
    <property type="entry name" value="HhH-GPD"/>
    <property type="match status" value="1"/>
</dbReference>
<dbReference type="SMART" id="SM00478">
    <property type="entry name" value="ENDO3c"/>
    <property type="match status" value="1"/>
</dbReference>
<dbReference type="SMART" id="SM00525">
    <property type="entry name" value="FES"/>
    <property type="match status" value="1"/>
</dbReference>
<dbReference type="SUPFAM" id="SSF48150">
    <property type="entry name" value="DNA-glycosylase"/>
    <property type="match status" value="1"/>
</dbReference>
<dbReference type="PROSITE" id="PS00764">
    <property type="entry name" value="ENDONUCLEASE_III_1"/>
    <property type="match status" value="1"/>
</dbReference>
<dbReference type="PROSITE" id="PS01155">
    <property type="entry name" value="ENDONUCLEASE_III_2"/>
    <property type="match status" value="1"/>
</dbReference>
<feature type="transit peptide" description="Chloroplast" evidence="1">
    <location>
        <begin position="1"/>
        <end position="54"/>
    </location>
</feature>
<feature type="chain" id="PRO_0000426012" description="Endonuclease III homolog 1, chloroplastic">
    <location>
        <begin position="55"/>
        <end position="379"/>
    </location>
</feature>
<feature type="domain" description="HhH" evidence="2">
    <location>
        <begin position="244"/>
        <end position="272"/>
    </location>
</feature>
<feature type="active site" description="Nucleophile; for N-glycosylase activity" evidence="2">
    <location>
        <position position="265"/>
    </location>
</feature>
<feature type="binding site" evidence="2">
    <location>
        <position position="340"/>
    </location>
    <ligand>
        <name>[4Fe-4S] cluster</name>
        <dbReference type="ChEBI" id="CHEBI:49883"/>
    </ligand>
</feature>
<feature type="binding site" evidence="2">
    <location>
        <position position="347"/>
    </location>
    <ligand>
        <name>[4Fe-4S] cluster</name>
        <dbReference type="ChEBI" id="CHEBI:49883"/>
    </ligand>
</feature>
<feature type="binding site" evidence="2">
    <location>
        <position position="350"/>
    </location>
    <ligand>
        <name>[4Fe-4S] cluster</name>
        <dbReference type="ChEBI" id="CHEBI:49883"/>
    </ligand>
</feature>
<feature type="binding site" evidence="2">
    <location>
        <position position="356"/>
    </location>
    <ligand>
        <name>[4Fe-4S] cluster</name>
        <dbReference type="ChEBI" id="CHEBI:49883"/>
    </ligand>
</feature>
<feature type="site" description="Important for catalytic activity" evidence="2">
    <location>
        <position position="284"/>
    </location>
</feature>
<feature type="splice variant" id="VSP_053921" description="In isoform 2." evidence="5">
    <location>
        <begin position="54"/>
        <end position="55"/>
    </location>
</feature>
<feature type="sequence conflict" description="In Ref. 4; AAM61598." evidence="6" ref="4">
    <original>S</original>
    <variation>I</variation>
    <location>
        <position position="27"/>
    </location>
</feature>
<feature type="sequence conflict" description="In Ref. 4; AAM61598." evidence="6" ref="4">
    <original>Y</original>
    <variation>D</variation>
    <location>
        <position position="84"/>
    </location>
</feature>
<feature type="sequence conflict" description="In Ref. 4; AAM61598." evidence="6" ref="4">
    <original>Y</original>
    <variation>N</variation>
    <location>
        <position position="132"/>
    </location>
</feature>
<feature type="sequence conflict" description="In Ref. 4; AAM61598." evidence="6" ref="4">
    <original>E</original>
    <variation>G</variation>
    <location>
        <position position="139"/>
    </location>
</feature>
<feature type="sequence conflict" description="In Ref. 4; AAM61598 and 5; CAC16135." evidence="6" ref="4 5">
    <original>I</original>
    <variation>L</variation>
    <location>
        <position position="343"/>
    </location>
</feature>
<gene>
    <name evidence="2" type="primary">NTH1</name>
    <name type="ordered locus">At2g31450</name>
    <name type="ORF">T28P16.6</name>
</gene>
<protein>
    <recommendedName>
        <fullName evidence="2">Endonuclease III homolog 1, chloroplastic</fullName>
        <shortName>AtNTH1</shortName>
        <ecNumber evidence="2">3.2.2.-</ecNumber>
        <ecNumber evidence="2">4.2.99.18</ecNumber>
    </recommendedName>
    <alternativeName>
        <fullName evidence="2">Bifunctional DNA N-glycosylase/DNA-(apurinic or apyrimidinic site) lyase 1</fullName>
        <shortName evidence="2">DNA glycosylase/AP lyase 1</shortName>
    </alternativeName>
</protein>
<proteinExistence type="evidence at transcript level"/>
<organism>
    <name type="scientific">Arabidopsis thaliana</name>
    <name type="common">Mouse-ear cress</name>
    <dbReference type="NCBI Taxonomy" id="3702"/>
    <lineage>
        <taxon>Eukaryota</taxon>
        <taxon>Viridiplantae</taxon>
        <taxon>Streptophyta</taxon>
        <taxon>Embryophyta</taxon>
        <taxon>Tracheophyta</taxon>
        <taxon>Spermatophyta</taxon>
        <taxon>Magnoliopsida</taxon>
        <taxon>eudicotyledons</taxon>
        <taxon>Gunneridae</taxon>
        <taxon>Pentapetalae</taxon>
        <taxon>rosids</taxon>
        <taxon>malvids</taxon>
        <taxon>Brassicales</taxon>
        <taxon>Brassicaceae</taxon>
        <taxon>Camelineae</taxon>
        <taxon>Arabidopsis</taxon>
    </lineage>
</organism>